<proteinExistence type="inferred from homology"/>
<organism>
    <name type="scientific">Canine oral papillomavirus (strain Y62)</name>
    <name type="common">COPV</name>
    <dbReference type="NCBI Taxonomy" id="766192"/>
    <lineage>
        <taxon>Viruses</taxon>
        <taxon>Monodnaviria</taxon>
        <taxon>Shotokuvirae</taxon>
        <taxon>Cossaviricota</taxon>
        <taxon>Papovaviricetes</taxon>
        <taxon>Zurhausenvirales</taxon>
        <taxon>Papillomaviridae</taxon>
        <taxon>Firstpapillomavirinae</taxon>
        <taxon>Lambdapapillomavirus</taxon>
        <taxon>Canine oral papillomavirus</taxon>
    </lineage>
</organism>
<sequence length="513" mass="55883">MALIRKRRAAPQDIYPACKVSNTCPADILNKMEQNTLADKILKYGSAGVFLGGLGISTGKGVGGRTGYIPLGGTESGVGVGTRVTTIRPTVPISSVGSPDFIPVDAVDPLGPAVIPPERFPIAVEDPFTLPPPRFPTAVEEDVIELQPIPGPSSEIPLAGPKITTDAQPAILEVIPETRPPKVITRHQYSNPAFEVSITSNSGAGESSASDHVLVEGFSGGHSIGEHIPLQDLAPSRPSFSETIEDETAFSSSTPKQGSRSERPKSYYNRRRYQQVQVTDPVFISRPRSLVTFDNPAFDESVDLIFERDVAEITAAPHADFTDITKLTKPAYHRGPSGHVRVSRLGHRANIKTRSGLTIGPQSHFYYDVSSIDPAESFELQALGNVSSAEQTGEAVISSGTGDFEIISLEDSILESYNDEDLIDVFEDVARDLHLLVGERRQQPIQVQRYIKPFSFVNEGVHIIHPGSESDFWLPPVTPDSTPAIVIDILDSSADYYLHPSLIKKRKRKHFFF</sequence>
<name>VL2_COPV6</name>
<gene>
    <name evidence="1" type="primary">L2</name>
</gene>
<accession>Q89892</accession>
<reference key="1">
    <citation type="journal article" date="1994" name="Virology">
        <title>Canine oral papillomavirus genomic sequence: a unique 1.5-kb intervening sequence between the E2 and L2 open reading frames.</title>
        <authorList>
            <person name="Delius H."/>
            <person name="van Ranst M.A."/>
            <person name="Jenson A.B."/>
            <person name="zur Hausen H."/>
            <person name="Sundberg J.P."/>
        </authorList>
    </citation>
    <scope>NUCLEOTIDE SEQUENCE [GENOMIC DNA]</scope>
</reference>
<reference key="2">
    <citation type="journal article" date="1995" name="Int. J. Oncol.">
        <title>Nucleotide sequence of a canine oral papillomavirus containing a long noncoding region.</title>
        <authorList>
            <person name="Isegawa N."/>
            <person name="Ohta M."/>
            <person name="Shirasawa H."/>
            <person name="Tokita H."/>
            <person name="Simizu B."/>
            <person name="Yamaura A."/>
        </authorList>
    </citation>
    <scope>NUCLEOTIDE SEQUENCE [GENOMIC DNA]</scope>
</reference>
<protein>
    <recommendedName>
        <fullName evidence="1">Minor capsid protein L2</fullName>
    </recommendedName>
</protein>
<keyword id="KW-0167">Capsid protein</keyword>
<keyword id="KW-1176">Cytoplasmic inwards viral transport</keyword>
<keyword id="KW-1015">Disulfide bond</keyword>
<keyword id="KW-0238">DNA-binding</keyword>
<keyword id="KW-1039">Host endosome</keyword>
<keyword id="KW-1040">Host Golgi apparatus</keyword>
<keyword id="KW-1048">Host nucleus</keyword>
<keyword id="KW-0945">Host-virus interaction</keyword>
<keyword id="KW-0426">Late protein</keyword>
<keyword id="KW-1177">Microtubular inwards viral transport</keyword>
<keyword id="KW-0597">Phosphoprotein</keyword>
<keyword id="KW-1185">Reference proteome</keyword>
<keyword id="KW-1163">Viral penetration into host nucleus</keyword>
<keyword id="KW-0946">Virion</keyword>
<keyword id="KW-1160">Virus entry into host cell</keyword>
<evidence type="ECO:0000255" key="1">
    <source>
        <dbReference type="HAMAP-Rule" id="MF_04003"/>
    </source>
</evidence>
<evidence type="ECO:0000256" key="2">
    <source>
        <dbReference type="SAM" id="MobiDB-lite"/>
    </source>
</evidence>
<dbReference type="EMBL" id="D55633">
    <property type="protein sequence ID" value="BAA09502.1"/>
    <property type="molecule type" value="Genomic_DNA"/>
</dbReference>
<dbReference type="EMBL" id="L22695">
    <property type="protein sequence ID" value="AAA61749.1"/>
    <property type="molecule type" value="Genomic_DNA"/>
</dbReference>
<dbReference type="RefSeq" id="NP_056818.1">
    <property type="nucleotide sequence ID" value="NC_001619.1"/>
</dbReference>
<dbReference type="GeneID" id="1497246"/>
<dbReference type="KEGG" id="vg:1497246"/>
<dbReference type="Proteomes" id="UP000008788">
    <property type="component" value="Segment"/>
</dbReference>
<dbReference type="Proteomes" id="UP000097271">
    <property type="component" value="Genome"/>
</dbReference>
<dbReference type="GO" id="GO:0043657">
    <property type="term" value="C:host cell"/>
    <property type="evidence" value="ECO:0007669"/>
    <property type="project" value="GOC"/>
</dbReference>
<dbReference type="GO" id="GO:0044174">
    <property type="term" value="C:host cell endosome"/>
    <property type="evidence" value="ECO:0007669"/>
    <property type="project" value="UniProtKB-KW"/>
</dbReference>
<dbReference type="GO" id="GO:0044177">
    <property type="term" value="C:host cell Golgi apparatus"/>
    <property type="evidence" value="ECO:0007669"/>
    <property type="project" value="UniProtKB-SubCell"/>
</dbReference>
<dbReference type="GO" id="GO:0042025">
    <property type="term" value="C:host cell nucleus"/>
    <property type="evidence" value="ECO:0007669"/>
    <property type="project" value="UniProtKB-SubCell"/>
</dbReference>
<dbReference type="GO" id="GO:0019028">
    <property type="term" value="C:viral capsid"/>
    <property type="evidence" value="ECO:0007669"/>
    <property type="project" value="UniProtKB-UniRule"/>
</dbReference>
<dbReference type="GO" id="GO:0003677">
    <property type="term" value="F:DNA binding"/>
    <property type="evidence" value="ECO:0007669"/>
    <property type="project" value="UniProtKB-UniRule"/>
</dbReference>
<dbReference type="GO" id="GO:0005198">
    <property type="term" value="F:structural molecule activity"/>
    <property type="evidence" value="ECO:0007669"/>
    <property type="project" value="UniProtKB-UniRule"/>
</dbReference>
<dbReference type="GO" id="GO:0075521">
    <property type="term" value="P:microtubule-dependent intracellular transport of viral material towards nucleus"/>
    <property type="evidence" value="ECO:0007669"/>
    <property type="project" value="UniProtKB-UniRule"/>
</dbReference>
<dbReference type="GO" id="GO:0046718">
    <property type="term" value="P:symbiont entry into host cell"/>
    <property type="evidence" value="ECO:0007669"/>
    <property type="project" value="UniProtKB-KW"/>
</dbReference>
<dbReference type="GO" id="GO:0075732">
    <property type="term" value="P:viral penetration into host nucleus"/>
    <property type="evidence" value="ECO:0007669"/>
    <property type="project" value="UniProtKB-KW"/>
</dbReference>
<dbReference type="HAMAP" id="MF_04003">
    <property type="entry name" value="PPV_L2"/>
    <property type="match status" value="1"/>
</dbReference>
<dbReference type="InterPro" id="IPR000784">
    <property type="entry name" value="Late_L2"/>
</dbReference>
<dbReference type="Pfam" id="PF00513">
    <property type="entry name" value="Late_protein_L2"/>
    <property type="match status" value="1"/>
</dbReference>
<feature type="chain" id="PRO_0000133640" description="Minor capsid protein L2">
    <location>
        <begin position="1"/>
        <end position="513"/>
    </location>
</feature>
<feature type="region of interest" description="Disordered" evidence="2">
    <location>
        <begin position="229"/>
        <end position="269"/>
    </location>
</feature>
<feature type="short sequence motif" description="Nuclear localization signal" evidence="1">
    <location>
        <begin position="1"/>
        <end position="9"/>
    </location>
</feature>
<feature type="short sequence motif" description="Nuclear localization signal" evidence="1">
    <location>
        <begin position="504"/>
        <end position="509"/>
    </location>
</feature>
<feature type="compositionally biased region" description="Polar residues" evidence="2">
    <location>
        <begin position="249"/>
        <end position="258"/>
    </location>
</feature>
<feature type="disulfide bond" evidence="1">
    <location>
        <begin position="18"/>
        <end position="24"/>
    </location>
</feature>
<comment type="function">
    <text evidence="1">Minor protein of the capsid that localizes along the inner surface of the virion, within the central cavities beneath the L1 pentamers. Plays a role in capsid stabilization through interaction with the major capsid protein L1. Once the virion enters the host cell, L2 escorts the genomic DNA into the nucleus by promoting escape from the endosomal compartments and traffic through the host Golgi network. Mechanistically, the C-terminus of L2 possesses a cell-penetrating peptide that protudes from the host endosome, interacts with host cytoplasmic retromer cargo and thereby mediates the capsid delivery to the host trans-Golgi network. Plays a role through its interaction with host dynein in the intracellular microtubule-dependent transport of viral capsid toward the nucleus. Mediates the viral genome import into the nucleus through binding to host importins. Once within the nucleus, L2 localizes viral genomes to host PML bodies in order to activate early gene expression for establishment of infection. Later on, promotes late gene expression by interacting with the viral E2 protein and by inhibiting its transcriptional activation functions. During virion assembly, encapsidates the genome by direct interaction with the viral DNA.</text>
</comment>
<comment type="subunit">
    <text evidence="1">Interacts with major capsid protein L1. Interacts with E2; this interaction inhibits E2 transcriptional activity but not the DNA replication function E2. Interacts with host GADD45GIP1. Interacts with host HSPA8; this interaction is required for L2 nuclear translocation. Interacts with host importins KPNB2 and KPNB3. Forms a complex with importin alpha2-beta1 heterodimers via interaction with the importin alpha2 adapter. Interacts with host DYNLT1; this interaction is essential for virus intracellular transport during entry. Interacts (via C-terminus) with host retromer subunits VPS35 and VPS29.</text>
</comment>
<comment type="subcellular location">
    <subcellularLocation>
        <location evidence="1">Virion</location>
    </subcellularLocation>
    <subcellularLocation>
        <location evidence="1">Host nucleus</location>
    </subcellularLocation>
    <subcellularLocation>
        <location evidence="1">Host early endosome</location>
    </subcellularLocation>
    <subcellularLocation>
        <location evidence="1">Host Golgi apparatus</location>
    </subcellularLocation>
</comment>
<comment type="PTM">
    <text evidence="1">Highly phosphorylated.</text>
</comment>
<comment type="similarity">
    <text evidence="1">Belongs to the papillomaviridae L2 protein family.</text>
</comment>
<organismHost>
    <name type="scientific">Canis lupus familiaris</name>
    <name type="common">Dog</name>
    <name type="synonym">Canis familiaris</name>
    <dbReference type="NCBI Taxonomy" id="9615"/>
</organismHost>